<dbReference type="EC" id="4.1.1.37" evidence="1"/>
<dbReference type="EMBL" id="CP000931">
    <property type="protein sequence ID" value="ABZ75059.1"/>
    <property type="molecule type" value="Genomic_DNA"/>
</dbReference>
<dbReference type="RefSeq" id="WP_012275613.1">
    <property type="nucleotide sequence ID" value="NC_010334.1"/>
</dbReference>
<dbReference type="SMR" id="B0TR87"/>
<dbReference type="STRING" id="458817.Shal_0484"/>
<dbReference type="KEGG" id="shl:Shal_0484"/>
<dbReference type="eggNOG" id="COG0407">
    <property type="taxonomic scope" value="Bacteria"/>
</dbReference>
<dbReference type="HOGENOM" id="CLU_040933_0_0_6"/>
<dbReference type="OrthoDB" id="9806656at2"/>
<dbReference type="UniPathway" id="UPA00251">
    <property type="reaction ID" value="UER00321"/>
</dbReference>
<dbReference type="Proteomes" id="UP000001317">
    <property type="component" value="Chromosome"/>
</dbReference>
<dbReference type="GO" id="GO:0005829">
    <property type="term" value="C:cytosol"/>
    <property type="evidence" value="ECO:0007669"/>
    <property type="project" value="TreeGrafter"/>
</dbReference>
<dbReference type="GO" id="GO:0004853">
    <property type="term" value="F:uroporphyrinogen decarboxylase activity"/>
    <property type="evidence" value="ECO:0007669"/>
    <property type="project" value="UniProtKB-UniRule"/>
</dbReference>
<dbReference type="GO" id="GO:0019353">
    <property type="term" value="P:protoporphyrinogen IX biosynthetic process from glutamate"/>
    <property type="evidence" value="ECO:0007669"/>
    <property type="project" value="TreeGrafter"/>
</dbReference>
<dbReference type="CDD" id="cd00717">
    <property type="entry name" value="URO-D"/>
    <property type="match status" value="1"/>
</dbReference>
<dbReference type="FunFam" id="3.20.20.210:FF:000001">
    <property type="entry name" value="Uroporphyrinogen decarboxylase"/>
    <property type="match status" value="1"/>
</dbReference>
<dbReference type="Gene3D" id="3.20.20.210">
    <property type="match status" value="1"/>
</dbReference>
<dbReference type="HAMAP" id="MF_00218">
    <property type="entry name" value="URO_D"/>
    <property type="match status" value="1"/>
</dbReference>
<dbReference type="InterPro" id="IPR038071">
    <property type="entry name" value="UROD/MetE-like_sf"/>
</dbReference>
<dbReference type="InterPro" id="IPR006361">
    <property type="entry name" value="Uroporphyrinogen_deCO2ase_HemE"/>
</dbReference>
<dbReference type="InterPro" id="IPR000257">
    <property type="entry name" value="Uroporphyrinogen_deCOase"/>
</dbReference>
<dbReference type="NCBIfam" id="TIGR01464">
    <property type="entry name" value="hemE"/>
    <property type="match status" value="1"/>
</dbReference>
<dbReference type="PANTHER" id="PTHR21091">
    <property type="entry name" value="METHYLTETRAHYDROFOLATE:HOMOCYSTEINE METHYLTRANSFERASE RELATED"/>
    <property type="match status" value="1"/>
</dbReference>
<dbReference type="PANTHER" id="PTHR21091:SF169">
    <property type="entry name" value="UROPORPHYRINOGEN DECARBOXYLASE"/>
    <property type="match status" value="1"/>
</dbReference>
<dbReference type="Pfam" id="PF01208">
    <property type="entry name" value="URO-D"/>
    <property type="match status" value="1"/>
</dbReference>
<dbReference type="SUPFAM" id="SSF51726">
    <property type="entry name" value="UROD/MetE-like"/>
    <property type="match status" value="1"/>
</dbReference>
<dbReference type="PROSITE" id="PS00906">
    <property type="entry name" value="UROD_1"/>
    <property type="match status" value="1"/>
</dbReference>
<dbReference type="PROSITE" id="PS00907">
    <property type="entry name" value="UROD_2"/>
    <property type="match status" value="1"/>
</dbReference>
<feature type="chain" id="PRO_1000078088" description="Uroporphyrinogen decarboxylase">
    <location>
        <begin position="1"/>
        <end position="354"/>
    </location>
</feature>
<feature type="binding site" evidence="1">
    <location>
        <begin position="27"/>
        <end position="31"/>
    </location>
    <ligand>
        <name>substrate</name>
    </ligand>
</feature>
<feature type="binding site" evidence="1">
    <location>
        <position position="77"/>
    </location>
    <ligand>
        <name>substrate</name>
    </ligand>
</feature>
<feature type="binding site" evidence="1">
    <location>
        <position position="154"/>
    </location>
    <ligand>
        <name>substrate</name>
    </ligand>
</feature>
<feature type="binding site" evidence="1">
    <location>
        <position position="209"/>
    </location>
    <ligand>
        <name>substrate</name>
    </ligand>
</feature>
<feature type="binding site" evidence="1">
    <location>
        <position position="327"/>
    </location>
    <ligand>
        <name>substrate</name>
    </ligand>
</feature>
<feature type="site" description="Transition state stabilizer" evidence="1">
    <location>
        <position position="77"/>
    </location>
</feature>
<proteinExistence type="inferred from homology"/>
<accession>B0TR87</accession>
<reference key="1">
    <citation type="submission" date="2008-01" db="EMBL/GenBank/DDBJ databases">
        <title>Complete sequence of Shewanella halifaxensis HAW-EB4.</title>
        <authorList>
            <consortium name="US DOE Joint Genome Institute"/>
            <person name="Copeland A."/>
            <person name="Lucas S."/>
            <person name="Lapidus A."/>
            <person name="Glavina del Rio T."/>
            <person name="Dalin E."/>
            <person name="Tice H."/>
            <person name="Bruce D."/>
            <person name="Goodwin L."/>
            <person name="Pitluck S."/>
            <person name="Sims D."/>
            <person name="Brettin T."/>
            <person name="Detter J.C."/>
            <person name="Han C."/>
            <person name="Kuske C.R."/>
            <person name="Schmutz J."/>
            <person name="Larimer F."/>
            <person name="Land M."/>
            <person name="Hauser L."/>
            <person name="Kyrpides N."/>
            <person name="Kim E."/>
            <person name="Zhao J.-S."/>
            <person name="Richardson P."/>
        </authorList>
    </citation>
    <scope>NUCLEOTIDE SEQUENCE [LARGE SCALE GENOMIC DNA]</scope>
    <source>
        <strain>HAW-EB4</strain>
    </source>
</reference>
<name>DCUP_SHEHH</name>
<gene>
    <name evidence="1" type="primary">hemE</name>
    <name type="ordered locus">Shal_0484</name>
</gene>
<sequence>MAELKNDRYLRALLKQPVDRTPVWMMRQAGRYLPEYKATRAEAGDFMSLCKNQDLACEVTLQPLRRYDLDAAILFSDILTVPDAMGLGLYFETGEGPRFERPTDTIDSIKKLCIPDPEDELGYVMRAVSTIRRELKGEVPLIGFSGSPWTLATYMVEGGSSKAFEKIKKMAYEEPATLHMLLDKLADSVTLYLNAQVANGAQSLMIFDSWGGALSHHAYREFSLRYMQKIVDGLTRHADGRQVPVTLFTKGGGLWLESMAETGCDALGLDWTVDIGDARRRVGHKVALQGNMDPSVLYGTPERIHQEVDQILSSYGEGTGHVFNLGHGIHQHVDPERAGSFINSVHELSAKYHK</sequence>
<protein>
    <recommendedName>
        <fullName evidence="1">Uroporphyrinogen decarboxylase</fullName>
        <shortName evidence="1">UPD</shortName>
        <shortName evidence="1">URO-D</shortName>
        <ecNumber evidence="1">4.1.1.37</ecNumber>
    </recommendedName>
</protein>
<keyword id="KW-0963">Cytoplasm</keyword>
<keyword id="KW-0210">Decarboxylase</keyword>
<keyword id="KW-0456">Lyase</keyword>
<keyword id="KW-0627">Porphyrin biosynthesis</keyword>
<organism>
    <name type="scientific">Shewanella halifaxensis (strain HAW-EB4)</name>
    <dbReference type="NCBI Taxonomy" id="458817"/>
    <lineage>
        <taxon>Bacteria</taxon>
        <taxon>Pseudomonadati</taxon>
        <taxon>Pseudomonadota</taxon>
        <taxon>Gammaproteobacteria</taxon>
        <taxon>Alteromonadales</taxon>
        <taxon>Shewanellaceae</taxon>
        <taxon>Shewanella</taxon>
    </lineage>
</organism>
<comment type="function">
    <text evidence="1">Catalyzes the decarboxylation of four acetate groups of uroporphyrinogen-III to yield coproporphyrinogen-III.</text>
</comment>
<comment type="catalytic activity">
    <reaction evidence="1">
        <text>uroporphyrinogen III + 4 H(+) = coproporphyrinogen III + 4 CO2</text>
        <dbReference type="Rhea" id="RHEA:19865"/>
        <dbReference type="ChEBI" id="CHEBI:15378"/>
        <dbReference type="ChEBI" id="CHEBI:16526"/>
        <dbReference type="ChEBI" id="CHEBI:57308"/>
        <dbReference type="ChEBI" id="CHEBI:57309"/>
        <dbReference type="EC" id="4.1.1.37"/>
    </reaction>
</comment>
<comment type="pathway">
    <text evidence="1">Porphyrin-containing compound metabolism; protoporphyrin-IX biosynthesis; coproporphyrinogen-III from 5-aminolevulinate: step 4/4.</text>
</comment>
<comment type="subunit">
    <text evidence="1">Homodimer.</text>
</comment>
<comment type="subcellular location">
    <subcellularLocation>
        <location evidence="1">Cytoplasm</location>
    </subcellularLocation>
</comment>
<comment type="similarity">
    <text evidence="1">Belongs to the uroporphyrinogen decarboxylase family.</text>
</comment>
<evidence type="ECO:0000255" key="1">
    <source>
        <dbReference type="HAMAP-Rule" id="MF_00218"/>
    </source>
</evidence>